<dbReference type="EC" id="1.7.1.13" evidence="1"/>
<dbReference type="EMBL" id="CP001358">
    <property type="protein sequence ID" value="ACL48562.1"/>
    <property type="molecule type" value="Genomic_DNA"/>
</dbReference>
<dbReference type="SMR" id="B8IYG6"/>
<dbReference type="STRING" id="525146.Ddes_0653"/>
<dbReference type="KEGG" id="dds:Ddes_0653"/>
<dbReference type="eggNOG" id="COG0780">
    <property type="taxonomic scope" value="Bacteria"/>
</dbReference>
<dbReference type="HOGENOM" id="CLU_102489_0_1_7"/>
<dbReference type="UniPathway" id="UPA00392"/>
<dbReference type="GO" id="GO:0005737">
    <property type="term" value="C:cytoplasm"/>
    <property type="evidence" value="ECO:0007669"/>
    <property type="project" value="UniProtKB-SubCell"/>
</dbReference>
<dbReference type="GO" id="GO:0033739">
    <property type="term" value="F:preQ1 synthase activity"/>
    <property type="evidence" value="ECO:0007669"/>
    <property type="project" value="UniProtKB-UniRule"/>
</dbReference>
<dbReference type="GO" id="GO:0008616">
    <property type="term" value="P:queuosine biosynthetic process"/>
    <property type="evidence" value="ECO:0007669"/>
    <property type="project" value="UniProtKB-UniRule"/>
</dbReference>
<dbReference type="GO" id="GO:0006400">
    <property type="term" value="P:tRNA modification"/>
    <property type="evidence" value="ECO:0007669"/>
    <property type="project" value="UniProtKB-UniRule"/>
</dbReference>
<dbReference type="Gene3D" id="3.30.1130.10">
    <property type="match status" value="1"/>
</dbReference>
<dbReference type="HAMAP" id="MF_00818">
    <property type="entry name" value="QueF_type1"/>
    <property type="match status" value="1"/>
</dbReference>
<dbReference type="InterPro" id="IPR043133">
    <property type="entry name" value="GTP-CH-I_C/QueF"/>
</dbReference>
<dbReference type="InterPro" id="IPR050084">
    <property type="entry name" value="NADPH_dep_7-cyano-7-deazaG_red"/>
</dbReference>
<dbReference type="InterPro" id="IPR029500">
    <property type="entry name" value="QueF"/>
</dbReference>
<dbReference type="InterPro" id="IPR016856">
    <property type="entry name" value="QueF_type1"/>
</dbReference>
<dbReference type="NCBIfam" id="TIGR03139">
    <property type="entry name" value="QueF-II"/>
    <property type="match status" value="1"/>
</dbReference>
<dbReference type="PANTHER" id="PTHR34354">
    <property type="entry name" value="NADPH-DEPENDENT 7-CYANO-7-DEAZAGUANINE REDUCTASE"/>
    <property type="match status" value="1"/>
</dbReference>
<dbReference type="PANTHER" id="PTHR34354:SF1">
    <property type="entry name" value="NADPH-DEPENDENT 7-CYANO-7-DEAZAGUANINE REDUCTASE"/>
    <property type="match status" value="1"/>
</dbReference>
<dbReference type="Pfam" id="PF14489">
    <property type="entry name" value="QueF"/>
    <property type="match status" value="1"/>
</dbReference>
<dbReference type="SUPFAM" id="SSF55620">
    <property type="entry name" value="Tetrahydrobiopterin biosynthesis enzymes-like"/>
    <property type="match status" value="1"/>
</dbReference>
<name>QUEF_DESDA</name>
<keyword id="KW-0963">Cytoplasm</keyword>
<keyword id="KW-0521">NADP</keyword>
<keyword id="KW-0560">Oxidoreductase</keyword>
<keyword id="KW-0671">Queuosine biosynthesis</keyword>
<evidence type="ECO:0000255" key="1">
    <source>
        <dbReference type="HAMAP-Rule" id="MF_00818"/>
    </source>
</evidence>
<evidence type="ECO:0000256" key="2">
    <source>
        <dbReference type="SAM" id="MobiDB-lite"/>
    </source>
</evidence>
<feature type="chain" id="PRO_1000148671" description="NADPH-dependent 7-cyano-7-deazaguanine reductase">
    <location>
        <begin position="1"/>
        <end position="167"/>
    </location>
</feature>
<feature type="region of interest" description="Disordered" evidence="2">
    <location>
        <begin position="1"/>
        <end position="24"/>
    </location>
</feature>
<feature type="active site" description="Thioimide intermediate" evidence="1">
    <location>
        <position position="57"/>
    </location>
</feature>
<feature type="active site" description="Proton donor" evidence="1">
    <location>
        <position position="64"/>
    </location>
</feature>
<feature type="binding site" evidence="1">
    <location>
        <begin position="79"/>
        <end position="81"/>
    </location>
    <ligand>
        <name>substrate</name>
    </ligand>
</feature>
<feature type="binding site" evidence="1">
    <location>
        <begin position="98"/>
        <end position="99"/>
    </location>
    <ligand>
        <name>substrate</name>
    </ligand>
</feature>
<proteinExistence type="inferred from homology"/>
<sequence length="167" mass="18830">MTTRSQDQTRDLKVLGTGRLTSPEGGPSVALLEAFPNCFPQRPYVISISFPEFTSLCPVTGQPDCGTITVEYIPDELCVESKSFKLYMFAFRNHQSFMETITNNVLEDLRALLNPCWCRVKGLFAPRGGTRIHVFAEAFKDGMPEEQSALVRETVRSWKSEPDPHRP</sequence>
<reference key="1">
    <citation type="submission" date="2009-01" db="EMBL/GenBank/DDBJ databases">
        <title>Complete sequence of Desulfovibrio desulfuricans subsp. desulfuricans str. ATCC 27774.</title>
        <authorList>
            <consortium name="US DOE Joint Genome Institute"/>
            <person name="Lucas S."/>
            <person name="Copeland A."/>
            <person name="Lapidus A."/>
            <person name="Glavina del Rio T."/>
            <person name="Tice H."/>
            <person name="Bruce D."/>
            <person name="Goodwin L."/>
            <person name="Pitluck S."/>
            <person name="Sims D."/>
            <person name="Lu M."/>
            <person name="Kiss H."/>
            <person name="Meineke L."/>
            <person name="Brettin T."/>
            <person name="Detter J.C."/>
            <person name="Han C."/>
            <person name="Larimer F."/>
            <person name="Land M."/>
            <person name="Hauser L."/>
            <person name="Kyrpides N."/>
            <person name="Ovchinnikova G."/>
            <person name="Hazen T.C."/>
        </authorList>
    </citation>
    <scope>NUCLEOTIDE SEQUENCE [LARGE SCALE GENOMIC DNA]</scope>
    <source>
        <strain>ATCC 27774 / DSM 6949 / MB</strain>
    </source>
</reference>
<protein>
    <recommendedName>
        <fullName evidence="1">NADPH-dependent 7-cyano-7-deazaguanine reductase</fullName>
        <ecNumber evidence="1">1.7.1.13</ecNumber>
    </recommendedName>
    <alternativeName>
        <fullName evidence="1">7-cyano-7-carbaguanine reductase</fullName>
    </alternativeName>
    <alternativeName>
        <fullName evidence="1">NADPH-dependent nitrile oxidoreductase</fullName>
    </alternativeName>
    <alternativeName>
        <fullName evidence="1">PreQ(0) reductase</fullName>
    </alternativeName>
</protein>
<organism>
    <name type="scientific">Desulfovibrio desulfuricans (strain ATCC 27774 / DSM 6949 / MB)</name>
    <dbReference type="NCBI Taxonomy" id="525146"/>
    <lineage>
        <taxon>Bacteria</taxon>
        <taxon>Pseudomonadati</taxon>
        <taxon>Thermodesulfobacteriota</taxon>
        <taxon>Desulfovibrionia</taxon>
        <taxon>Desulfovibrionales</taxon>
        <taxon>Desulfovibrionaceae</taxon>
        <taxon>Desulfovibrio</taxon>
    </lineage>
</organism>
<gene>
    <name evidence="1" type="primary">queF</name>
    <name type="ordered locus">Ddes_0653</name>
</gene>
<accession>B8IYG6</accession>
<comment type="function">
    <text evidence="1">Catalyzes the NADPH-dependent reduction of 7-cyano-7-deazaguanine (preQ0) to 7-aminomethyl-7-deazaguanine (preQ1).</text>
</comment>
<comment type="catalytic activity">
    <reaction evidence="1">
        <text>7-aminomethyl-7-carbaguanine + 2 NADP(+) = 7-cyano-7-deazaguanine + 2 NADPH + 3 H(+)</text>
        <dbReference type="Rhea" id="RHEA:13409"/>
        <dbReference type="ChEBI" id="CHEBI:15378"/>
        <dbReference type="ChEBI" id="CHEBI:45075"/>
        <dbReference type="ChEBI" id="CHEBI:57783"/>
        <dbReference type="ChEBI" id="CHEBI:58349"/>
        <dbReference type="ChEBI" id="CHEBI:58703"/>
        <dbReference type="EC" id="1.7.1.13"/>
    </reaction>
</comment>
<comment type="pathway">
    <text evidence="1">tRNA modification; tRNA-queuosine biosynthesis.</text>
</comment>
<comment type="subcellular location">
    <subcellularLocation>
        <location evidence="1">Cytoplasm</location>
    </subcellularLocation>
</comment>
<comment type="similarity">
    <text evidence="1">Belongs to the GTP cyclohydrolase I family. QueF type 1 subfamily.</text>
</comment>